<name>NIKR_BRUSU</name>
<dbReference type="EMBL" id="AJ278644">
    <property type="protein sequence ID" value="CAC24692.1"/>
    <property type="molecule type" value="Genomic_DNA"/>
</dbReference>
<dbReference type="EMBL" id="AE014292">
    <property type="protein sequence ID" value="AAN33983.1"/>
    <property type="molecule type" value="Genomic_DNA"/>
</dbReference>
<dbReference type="EMBL" id="CP002998">
    <property type="protein sequence ID" value="AEM20259.1"/>
    <property type="molecule type" value="Genomic_DNA"/>
</dbReference>
<dbReference type="RefSeq" id="WP_002965835.1">
    <property type="nucleotide sequence ID" value="NZ_KN046805.1"/>
</dbReference>
<dbReference type="SMR" id="Q9AL83"/>
<dbReference type="GeneID" id="97535107"/>
<dbReference type="KEGG" id="bms:BRA0805"/>
<dbReference type="KEGG" id="bsi:BS1330_II0798"/>
<dbReference type="PATRIC" id="fig|204722.21.peg.3531"/>
<dbReference type="HOGENOM" id="CLU_113319_1_4_5"/>
<dbReference type="PhylomeDB" id="Q9AL83"/>
<dbReference type="Proteomes" id="UP000007104">
    <property type="component" value="Chromosome II"/>
</dbReference>
<dbReference type="GO" id="GO:0003677">
    <property type="term" value="F:DNA binding"/>
    <property type="evidence" value="ECO:0007669"/>
    <property type="project" value="UniProtKB-KW"/>
</dbReference>
<dbReference type="GO" id="GO:0003700">
    <property type="term" value="F:DNA-binding transcription factor activity"/>
    <property type="evidence" value="ECO:0007669"/>
    <property type="project" value="UniProtKB-UniRule"/>
</dbReference>
<dbReference type="GO" id="GO:0016151">
    <property type="term" value="F:nickel cation binding"/>
    <property type="evidence" value="ECO:0007669"/>
    <property type="project" value="UniProtKB-UniRule"/>
</dbReference>
<dbReference type="GO" id="GO:0010045">
    <property type="term" value="P:response to nickel cation"/>
    <property type="evidence" value="ECO:0007669"/>
    <property type="project" value="InterPro"/>
</dbReference>
<dbReference type="CDD" id="cd22231">
    <property type="entry name" value="RHH_NikR_HicB-like"/>
    <property type="match status" value="1"/>
</dbReference>
<dbReference type="Gene3D" id="3.30.70.1150">
    <property type="entry name" value="ACT-like. Chain A, domain 2"/>
    <property type="match status" value="1"/>
</dbReference>
<dbReference type="Gene3D" id="1.10.1220.10">
    <property type="entry name" value="Met repressor-like"/>
    <property type="match status" value="1"/>
</dbReference>
<dbReference type="HAMAP" id="MF_00476">
    <property type="entry name" value="NikR"/>
    <property type="match status" value="1"/>
</dbReference>
<dbReference type="InterPro" id="IPR027271">
    <property type="entry name" value="Acetolactate_synth/TF_NikR_C"/>
</dbReference>
<dbReference type="InterPro" id="IPR045865">
    <property type="entry name" value="ACT-like_dom_sf"/>
</dbReference>
<dbReference type="InterPro" id="IPR013321">
    <property type="entry name" value="Arc_rbn_hlx_hlx"/>
</dbReference>
<dbReference type="InterPro" id="IPR002145">
    <property type="entry name" value="CopG"/>
</dbReference>
<dbReference type="InterPro" id="IPR050192">
    <property type="entry name" value="CopG/NikR_regulator"/>
</dbReference>
<dbReference type="InterPro" id="IPR022988">
    <property type="entry name" value="Ni_resp_reg_NikR"/>
</dbReference>
<dbReference type="InterPro" id="IPR014160">
    <property type="entry name" value="Nickel_NikR_proteobac"/>
</dbReference>
<dbReference type="InterPro" id="IPR010985">
    <property type="entry name" value="Ribbon_hlx_hlx"/>
</dbReference>
<dbReference type="InterPro" id="IPR014864">
    <property type="entry name" value="TF_NikR_Ni-bd_C"/>
</dbReference>
<dbReference type="NCBIfam" id="TIGR02793">
    <property type="entry name" value="nikR"/>
    <property type="match status" value="1"/>
</dbReference>
<dbReference type="NCBIfam" id="NF002815">
    <property type="entry name" value="PRK02967.1"/>
    <property type="match status" value="1"/>
</dbReference>
<dbReference type="NCBIfam" id="NF003381">
    <property type="entry name" value="PRK04460.1"/>
    <property type="match status" value="1"/>
</dbReference>
<dbReference type="PANTHER" id="PTHR34719">
    <property type="entry name" value="NICKEL-RESPONSIVE REGULATOR"/>
    <property type="match status" value="1"/>
</dbReference>
<dbReference type="PANTHER" id="PTHR34719:SF2">
    <property type="entry name" value="NICKEL-RESPONSIVE REGULATOR"/>
    <property type="match status" value="1"/>
</dbReference>
<dbReference type="Pfam" id="PF08753">
    <property type="entry name" value="NikR_C"/>
    <property type="match status" value="1"/>
</dbReference>
<dbReference type="Pfam" id="PF01402">
    <property type="entry name" value="RHH_1"/>
    <property type="match status" value="1"/>
</dbReference>
<dbReference type="SUPFAM" id="SSF55021">
    <property type="entry name" value="ACT-like"/>
    <property type="match status" value="1"/>
</dbReference>
<dbReference type="SUPFAM" id="SSF47598">
    <property type="entry name" value="Ribbon-helix-helix"/>
    <property type="match status" value="1"/>
</dbReference>
<sequence>MQRITITIDDDLMAALDRMIEIKGYQNRSEALRDLARTGLQQASLEEGQMEACVGVLSYTYDHSARDLSKKLTNTHHDHHNISVASMHVHLDHDRCLEVSILKGKTDDVRHFADHVKAERHVTHGTLAVLPL</sequence>
<keyword id="KW-0238">DNA-binding</keyword>
<keyword id="KW-0479">Metal-binding</keyword>
<keyword id="KW-0533">Nickel</keyword>
<keyword id="KW-0678">Repressor</keyword>
<keyword id="KW-0804">Transcription</keyword>
<keyword id="KW-0805">Transcription regulation</keyword>
<organism>
    <name type="scientific">Brucella suis biovar 1 (strain 1330)</name>
    <dbReference type="NCBI Taxonomy" id="204722"/>
    <lineage>
        <taxon>Bacteria</taxon>
        <taxon>Pseudomonadati</taxon>
        <taxon>Pseudomonadota</taxon>
        <taxon>Alphaproteobacteria</taxon>
        <taxon>Hyphomicrobiales</taxon>
        <taxon>Brucellaceae</taxon>
        <taxon>Brucella/Ochrobactrum group</taxon>
        <taxon>Brucella</taxon>
    </lineage>
</organism>
<proteinExistence type="inferred from homology"/>
<gene>
    <name type="primary">nikR</name>
    <name type="ordered locus">BRA0805</name>
    <name type="ordered locus">BS1330_II0798</name>
</gene>
<protein>
    <recommendedName>
        <fullName>Nickel-responsive regulator</fullName>
    </recommendedName>
</protein>
<feature type="chain" id="PRO_0000139284" description="Nickel-responsive regulator">
    <location>
        <begin position="1"/>
        <end position="132"/>
    </location>
</feature>
<feature type="binding site" evidence="1">
    <location>
        <position position="77"/>
    </location>
    <ligand>
        <name>Ni(2+)</name>
        <dbReference type="ChEBI" id="CHEBI:49786"/>
    </ligand>
</feature>
<feature type="binding site" evidence="1">
    <location>
        <position position="88"/>
    </location>
    <ligand>
        <name>Ni(2+)</name>
        <dbReference type="ChEBI" id="CHEBI:49786"/>
    </ligand>
</feature>
<feature type="binding site" evidence="1">
    <location>
        <position position="90"/>
    </location>
    <ligand>
        <name>Ni(2+)</name>
        <dbReference type="ChEBI" id="CHEBI:49786"/>
    </ligand>
</feature>
<feature type="binding site" evidence="1">
    <location>
        <position position="96"/>
    </location>
    <ligand>
        <name>Ni(2+)</name>
        <dbReference type="ChEBI" id="CHEBI:49786"/>
    </ligand>
</feature>
<comment type="function">
    <text evidence="1">Transcriptional repressor of the nikABCDE operon. Is active in the presence of excessive concentrations of intracellular nickel (By similarity).</text>
</comment>
<comment type="cofactor">
    <cofactor evidence="1">
        <name>Ni(2+)</name>
        <dbReference type="ChEBI" id="CHEBI:49786"/>
    </cofactor>
    <text evidence="1">Binds 1 nickel ion per subunit.</text>
</comment>
<comment type="subunit">
    <text evidence="1">Homotetramer.</text>
</comment>
<comment type="similarity">
    <text evidence="2">Belongs to the transcriptional regulatory CopG/NikR family.</text>
</comment>
<accession>Q9AL83</accession>
<accession>G0KDH1</accession>
<evidence type="ECO:0000250" key="1"/>
<evidence type="ECO:0000305" key="2"/>
<reference key="1">
    <citation type="journal article" date="2001" name="J. Bacteriol.">
        <title>Identification of the nik gene cluster of Brucella suis: regulation and contribution to urease activity.</title>
        <authorList>
            <person name="Jubier-Maurin V."/>
            <person name="Rodrigue A."/>
            <person name="Ouahrani-Bettache S."/>
            <person name="Layssac M."/>
            <person name="Mandrand-Berthelot M.-A."/>
            <person name="Koehler S."/>
            <person name="Liautard J.-P."/>
        </authorList>
    </citation>
    <scope>NUCLEOTIDE SEQUENCE [GENOMIC DNA]</scope>
    <source>
        <strain>1330</strain>
    </source>
</reference>
<reference key="2">
    <citation type="journal article" date="2002" name="Proc. Natl. Acad. Sci. U.S.A.">
        <title>The Brucella suis genome reveals fundamental similarities between animal and plant pathogens and symbionts.</title>
        <authorList>
            <person name="Paulsen I.T."/>
            <person name="Seshadri R."/>
            <person name="Nelson K.E."/>
            <person name="Eisen J.A."/>
            <person name="Heidelberg J.F."/>
            <person name="Read T.D."/>
            <person name="Dodson R.J."/>
            <person name="Umayam L.A."/>
            <person name="Brinkac L.M."/>
            <person name="Beanan M.J."/>
            <person name="Daugherty S.C."/>
            <person name="DeBoy R.T."/>
            <person name="Durkin A.S."/>
            <person name="Kolonay J.F."/>
            <person name="Madupu R."/>
            <person name="Nelson W.C."/>
            <person name="Ayodeji B."/>
            <person name="Kraul M."/>
            <person name="Shetty J."/>
            <person name="Malek J.A."/>
            <person name="Van Aken S.E."/>
            <person name="Riedmuller S."/>
            <person name="Tettelin H."/>
            <person name="Gill S.R."/>
            <person name="White O."/>
            <person name="Salzberg S.L."/>
            <person name="Hoover D.L."/>
            <person name="Lindler L.E."/>
            <person name="Halling S.M."/>
            <person name="Boyle S.M."/>
            <person name="Fraser C.M."/>
        </authorList>
    </citation>
    <scope>NUCLEOTIDE SEQUENCE [LARGE SCALE GENOMIC DNA]</scope>
    <source>
        <strain>1330</strain>
    </source>
</reference>
<reference key="3">
    <citation type="journal article" date="2011" name="J. Bacteriol.">
        <title>Revised genome sequence of Brucella suis 1330.</title>
        <authorList>
            <person name="Tae H."/>
            <person name="Shallom S."/>
            <person name="Settlage R."/>
            <person name="Preston D."/>
            <person name="Adams L.G."/>
            <person name="Garner H.R."/>
        </authorList>
    </citation>
    <scope>NUCLEOTIDE SEQUENCE [LARGE SCALE GENOMIC DNA]</scope>
    <source>
        <strain>1330</strain>
    </source>
</reference>